<accession>Q59916</accession>
<keyword id="KW-1003">Cell membrane</keyword>
<keyword id="KW-0472">Membrane</keyword>
<keyword id="KW-0653">Protein transport</keyword>
<keyword id="KW-0811">Translocation</keyword>
<keyword id="KW-0812">Transmembrane</keyword>
<keyword id="KW-1133">Transmembrane helix</keyword>
<keyword id="KW-0813">Transport</keyword>
<sequence>MFTAFARAFKTPDLRKKLLFTLGIIVIYRLGAHIPAPGVDYSKVQQCIDQADSGGLLGLMQMFSGGALLQITIFALGIMPYITASIILQLLTVVIPRLEALKKEGQSGTAKITQYTRYLTVALAILQGTGLVATARSGALFQNCSVGSQIVADKSIFTTIIMVLTMTAGTPPVMWLGELITDRGIGNGMSIPMFISIAATFPGALWAIKESGKLADGWIEFGTVILIGFVMVALVVFVEQAQRRIPVQLPKRMIGRRSYGGTSTYIPLKVNQAGVIPVIFASSLLYIPALIVQFSNSQAGWATWIQDNFVTGDHPYYIATYFVLIVFFAFFYVAISFNPDEVADNMKKYGGFIPGIRAGRPTAEYLSYVLNRITWPGSLYLGLIALVPTMALAGFGGANQNFPFGGTSILIIVGVGLETVKQIESQLQQRNYEGFLR</sequence>
<feature type="chain" id="PRO_0000131752" description="Protein translocase subunit SecY">
    <location>
        <begin position="1"/>
        <end position="437"/>
    </location>
</feature>
<feature type="transmembrane region" description="Helical" evidence="1">
    <location>
        <begin position="19"/>
        <end position="39"/>
    </location>
</feature>
<feature type="transmembrane region" description="Helical" evidence="1">
    <location>
        <begin position="68"/>
        <end position="88"/>
    </location>
</feature>
<feature type="transmembrane region" description="Helical" evidence="1">
    <location>
        <begin position="121"/>
        <end position="141"/>
    </location>
</feature>
<feature type="transmembrane region" description="Helical" evidence="1">
    <location>
        <begin position="156"/>
        <end position="176"/>
    </location>
</feature>
<feature type="transmembrane region" description="Helical" evidence="1">
    <location>
        <begin position="188"/>
        <end position="208"/>
    </location>
</feature>
<feature type="transmembrane region" description="Helical" evidence="1">
    <location>
        <begin position="218"/>
        <end position="238"/>
    </location>
</feature>
<feature type="transmembrane region" description="Helical" evidence="1">
    <location>
        <begin position="274"/>
        <end position="294"/>
    </location>
</feature>
<feature type="transmembrane region" description="Helical" evidence="1">
    <location>
        <begin position="317"/>
        <end position="337"/>
    </location>
</feature>
<feature type="transmembrane region" description="Helical" evidence="1">
    <location>
        <begin position="378"/>
        <end position="398"/>
    </location>
</feature>
<feature type="transmembrane region" description="Helical" evidence="1">
    <location>
        <begin position="400"/>
        <end position="420"/>
    </location>
</feature>
<organism>
    <name type="scientific">Streptomyces griseus</name>
    <dbReference type="NCBI Taxonomy" id="1911"/>
    <lineage>
        <taxon>Bacteria</taxon>
        <taxon>Bacillati</taxon>
        <taxon>Actinomycetota</taxon>
        <taxon>Actinomycetes</taxon>
        <taxon>Kitasatosporales</taxon>
        <taxon>Streptomycetaceae</taxon>
        <taxon>Streptomyces</taxon>
    </lineage>
</organism>
<evidence type="ECO:0000255" key="1">
    <source>
        <dbReference type="HAMAP-Rule" id="MF_01465"/>
    </source>
</evidence>
<proteinExistence type="inferred from homology"/>
<gene>
    <name evidence="1" type="primary">secY</name>
</gene>
<reference key="1">
    <citation type="journal article" date="1999" name="Biochim. Biophys. Acta">
        <title>Analysis and regulation of the secY gene from Streptomyces griseus N2-3-11 and interaction of the SecY protein with the SecA protein.</title>
        <authorList>
            <person name="Poehling S."/>
            <person name="Piepersberg W."/>
            <person name="Wehmeier U.F."/>
        </authorList>
    </citation>
    <scope>NUCLEOTIDE SEQUENCE [GENOMIC DNA]</scope>
    <source>
        <strain>N2-3-11</strain>
    </source>
</reference>
<name>SECY_STRGR</name>
<protein>
    <recommendedName>
        <fullName evidence="1">Protein translocase subunit SecY</fullName>
    </recommendedName>
</protein>
<dbReference type="EMBL" id="X95915">
    <property type="protein sequence ID" value="CAA65161.1"/>
    <property type="molecule type" value="Genomic_DNA"/>
</dbReference>
<dbReference type="SMR" id="Q59916"/>
<dbReference type="STRING" id="1911.GCA_001715295_02273"/>
<dbReference type="GO" id="GO:0005886">
    <property type="term" value="C:plasma membrane"/>
    <property type="evidence" value="ECO:0007669"/>
    <property type="project" value="UniProtKB-SubCell"/>
</dbReference>
<dbReference type="GO" id="GO:0065002">
    <property type="term" value="P:intracellular protein transmembrane transport"/>
    <property type="evidence" value="ECO:0007669"/>
    <property type="project" value="UniProtKB-UniRule"/>
</dbReference>
<dbReference type="GO" id="GO:0006605">
    <property type="term" value="P:protein targeting"/>
    <property type="evidence" value="ECO:0007669"/>
    <property type="project" value="UniProtKB-UniRule"/>
</dbReference>
<dbReference type="GO" id="GO:0043952">
    <property type="term" value="P:protein transport by the Sec complex"/>
    <property type="evidence" value="ECO:0007669"/>
    <property type="project" value="UniProtKB-UniRule"/>
</dbReference>
<dbReference type="FunFam" id="1.10.3370.10:FF:000001">
    <property type="entry name" value="Preprotein translocase subunit SecY"/>
    <property type="match status" value="1"/>
</dbReference>
<dbReference type="Gene3D" id="1.10.3370.10">
    <property type="entry name" value="SecY subunit domain"/>
    <property type="match status" value="1"/>
</dbReference>
<dbReference type="HAMAP" id="MF_01465">
    <property type="entry name" value="SecY"/>
    <property type="match status" value="1"/>
</dbReference>
<dbReference type="InterPro" id="IPR026593">
    <property type="entry name" value="SecY"/>
</dbReference>
<dbReference type="InterPro" id="IPR002208">
    <property type="entry name" value="SecY/SEC61-alpha"/>
</dbReference>
<dbReference type="InterPro" id="IPR030659">
    <property type="entry name" value="SecY_CS"/>
</dbReference>
<dbReference type="InterPro" id="IPR023201">
    <property type="entry name" value="SecY_dom_sf"/>
</dbReference>
<dbReference type="NCBIfam" id="TIGR00967">
    <property type="entry name" value="3a0501s007"/>
    <property type="match status" value="1"/>
</dbReference>
<dbReference type="PANTHER" id="PTHR10906">
    <property type="entry name" value="SECY/SEC61-ALPHA FAMILY MEMBER"/>
    <property type="match status" value="1"/>
</dbReference>
<dbReference type="Pfam" id="PF00344">
    <property type="entry name" value="SecY"/>
    <property type="match status" value="1"/>
</dbReference>
<dbReference type="PIRSF" id="PIRSF004557">
    <property type="entry name" value="SecY"/>
    <property type="match status" value="1"/>
</dbReference>
<dbReference type="PRINTS" id="PR00303">
    <property type="entry name" value="SECYTRNLCASE"/>
</dbReference>
<dbReference type="SUPFAM" id="SSF103491">
    <property type="entry name" value="Preprotein translocase SecY subunit"/>
    <property type="match status" value="1"/>
</dbReference>
<dbReference type="PROSITE" id="PS00755">
    <property type="entry name" value="SECY_1"/>
    <property type="match status" value="1"/>
</dbReference>
<dbReference type="PROSITE" id="PS00756">
    <property type="entry name" value="SECY_2"/>
    <property type="match status" value="1"/>
</dbReference>
<comment type="function">
    <text evidence="1">The central subunit of the protein translocation channel SecYEG. Consists of two halves formed by TMs 1-5 and 6-10. These two domains form a lateral gate at the front which open onto the bilayer between TMs 2 and 7, and are clamped together by SecE at the back. The channel is closed by both a pore ring composed of hydrophobic SecY resides and a short helix (helix 2A) on the extracellular side of the membrane which forms a plug. The plug probably moves laterally to allow the channel to open. The ring and the pore may move independently.</text>
</comment>
<comment type="subunit">
    <text evidence="1">Component of the Sec protein translocase complex. Heterotrimer consisting of SecY, SecE and SecG subunits. The heterotrimers can form oligomers, although 1 heterotrimer is thought to be able to translocate proteins. Interacts with the ribosome. Interacts with SecDF, and other proteins may be involved. Interacts with SecA.</text>
</comment>
<comment type="subcellular location">
    <subcellularLocation>
        <location evidence="1">Cell membrane</location>
        <topology evidence="1">Multi-pass membrane protein</topology>
    </subcellularLocation>
</comment>
<comment type="similarity">
    <text evidence="1">Belongs to the SecY/SEC61-alpha family.</text>
</comment>